<organism>
    <name type="scientific">Saccharomyces cerevisiae (strain ATCC 204508 / S288c)</name>
    <name type="common">Baker's yeast</name>
    <dbReference type="NCBI Taxonomy" id="559292"/>
    <lineage>
        <taxon>Eukaryota</taxon>
        <taxon>Fungi</taxon>
        <taxon>Dikarya</taxon>
        <taxon>Ascomycota</taxon>
        <taxon>Saccharomycotina</taxon>
        <taxon>Saccharomycetes</taxon>
        <taxon>Saccharomycetales</taxon>
        <taxon>Saccharomycetaceae</taxon>
        <taxon>Saccharomyces</taxon>
    </lineage>
</organism>
<comment type="catalytic activity">
    <reaction>
        <text>Thiol-dependent hydrolysis of ester, thioester, amide, peptide and isopeptide bonds formed by the C-terminal Gly of ubiquitin (a 76-residue protein attached to proteins as an intracellular targeting signal).</text>
        <dbReference type="EC" id="3.4.19.12"/>
    </reaction>
</comment>
<comment type="miscellaneous">
    <text evidence="5">Present with 300 molecules/cell in log phase SD medium.</text>
</comment>
<comment type="similarity">
    <text evidence="6">Belongs to the peptidase C19 family.</text>
</comment>
<keyword id="KW-0378">Hydrolase</keyword>
<keyword id="KW-0645">Protease</keyword>
<keyword id="KW-1185">Reference proteome</keyword>
<keyword id="KW-0788">Thiol protease</keyword>
<keyword id="KW-0833">Ubl conjugation pathway</keyword>
<proteinExistence type="evidence at protein level"/>
<accession>P39944</accession>
<accession>D3DM51</accession>
<gene>
    <name type="primary">UBP5</name>
    <name type="ordered locus">YER144C</name>
</gene>
<protein>
    <recommendedName>
        <fullName>Ubiquitin carboxyl-terminal hydrolase 5</fullName>
        <ecNumber>3.4.19.12</ecNumber>
    </recommendedName>
    <alternativeName>
        <fullName>Deubiquitinating enzyme 5</fullName>
    </alternativeName>
    <alternativeName>
        <fullName>Ubiquitin thioesterase 5</fullName>
    </alternativeName>
    <alternativeName>
        <fullName>Ubiquitin-specific-processing protease 5</fullName>
    </alternativeName>
</protein>
<reference key="1">
    <citation type="journal article" date="1994" name="Yeast">
        <title>UBP5 encodes a putative yeast ubiquitin-specific protease that is related to the human Tre-2 oncogene product.</title>
        <authorList>
            <person name="Xiao W."/>
            <person name="Fontanie T."/>
            <person name="Tang M."/>
        </authorList>
    </citation>
    <scope>NUCLEOTIDE SEQUENCE [GENOMIC DNA]</scope>
</reference>
<reference key="2">
    <citation type="journal article" date="1997" name="Nature">
        <title>The nucleotide sequence of Saccharomyces cerevisiae chromosome V.</title>
        <authorList>
            <person name="Dietrich F.S."/>
            <person name="Mulligan J.T."/>
            <person name="Hennessy K.M."/>
            <person name="Yelton M.A."/>
            <person name="Allen E."/>
            <person name="Araujo R."/>
            <person name="Aviles E."/>
            <person name="Berno A."/>
            <person name="Brennan T."/>
            <person name="Carpenter J."/>
            <person name="Chen E."/>
            <person name="Cherry J.M."/>
            <person name="Chung E."/>
            <person name="Duncan M."/>
            <person name="Guzman E."/>
            <person name="Hartzell G."/>
            <person name="Hunicke-Smith S."/>
            <person name="Hyman R.W."/>
            <person name="Kayser A."/>
            <person name="Komp C."/>
            <person name="Lashkari D."/>
            <person name="Lew H."/>
            <person name="Lin D."/>
            <person name="Mosedale D."/>
            <person name="Nakahara K."/>
            <person name="Namath A."/>
            <person name="Norgren R."/>
            <person name="Oefner P."/>
            <person name="Oh C."/>
            <person name="Petel F.X."/>
            <person name="Roberts D."/>
            <person name="Sehl P."/>
            <person name="Schramm S."/>
            <person name="Shogren T."/>
            <person name="Smith V."/>
            <person name="Taylor P."/>
            <person name="Wei Y."/>
            <person name="Botstein D."/>
            <person name="Davis R.W."/>
        </authorList>
    </citation>
    <scope>NUCLEOTIDE SEQUENCE [LARGE SCALE GENOMIC DNA]</scope>
    <source>
        <strain>ATCC 204508 / S288c</strain>
    </source>
</reference>
<reference key="3">
    <citation type="journal article" date="2014" name="G3 (Bethesda)">
        <title>The reference genome sequence of Saccharomyces cerevisiae: Then and now.</title>
        <authorList>
            <person name="Engel S.R."/>
            <person name="Dietrich F.S."/>
            <person name="Fisk D.G."/>
            <person name="Binkley G."/>
            <person name="Balakrishnan R."/>
            <person name="Costanzo M.C."/>
            <person name="Dwight S.S."/>
            <person name="Hitz B.C."/>
            <person name="Karra K."/>
            <person name="Nash R.S."/>
            <person name="Weng S."/>
            <person name="Wong E.D."/>
            <person name="Lloyd P."/>
            <person name="Skrzypek M.S."/>
            <person name="Miyasato S.R."/>
            <person name="Simison M."/>
            <person name="Cherry J.M."/>
        </authorList>
    </citation>
    <scope>GENOME REANNOTATION</scope>
    <source>
        <strain>ATCC 204508 / S288c</strain>
    </source>
</reference>
<reference key="4">
    <citation type="journal article" date="2003" name="Nature">
        <title>Global analysis of protein expression in yeast.</title>
        <authorList>
            <person name="Ghaemmaghami S."/>
            <person name="Huh W.-K."/>
            <person name="Bower K."/>
            <person name="Howson R.W."/>
            <person name="Belle A."/>
            <person name="Dephoure N."/>
            <person name="O'Shea E.K."/>
            <person name="Weissman J.S."/>
        </authorList>
    </citation>
    <scope>LEVEL OF PROTEIN EXPRESSION [LARGE SCALE ANALYSIS]</scope>
</reference>
<evidence type="ECO:0000255" key="1">
    <source>
        <dbReference type="PROSITE-ProRule" id="PRU00173"/>
    </source>
</evidence>
<evidence type="ECO:0000255" key="2">
    <source>
        <dbReference type="PROSITE-ProRule" id="PRU10092"/>
    </source>
</evidence>
<evidence type="ECO:0000255" key="3">
    <source>
        <dbReference type="PROSITE-ProRule" id="PRU10093"/>
    </source>
</evidence>
<evidence type="ECO:0000256" key="4">
    <source>
        <dbReference type="SAM" id="MobiDB-lite"/>
    </source>
</evidence>
<evidence type="ECO:0000269" key="5">
    <source>
    </source>
</evidence>
<evidence type="ECO:0000305" key="6"/>
<name>UBP5_YEAST</name>
<dbReference type="EC" id="3.4.19.12"/>
<dbReference type="EMBL" id="U10082">
    <property type="protein sequence ID" value="AAC48928.1"/>
    <property type="molecule type" value="Genomic_DNA"/>
</dbReference>
<dbReference type="EMBL" id="U18917">
    <property type="protein sequence ID" value="AAB64671.1"/>
    <property type="molecule type" value="Genomic_DNA"/>
</dbReference>
<dbReference type="EMBL" id="BK006939">
    <property type="protein sequence ID" value="DAA07805.1"/>
    <property type="molecule type" value="Genomic_DNA"/>
</dbReference>
<dbReference type="PIR" id="S50277">
    <property type="entry name" value="S50277"/>
</dbReference>
<dbReference type="RefSeq" id="NP_011071.3">
    <property type="nucleotide sequence ID" value="NM_001179034.3"/>
</dbReference>
<dbReference type="SMR" id="P39944"/>
<dbReference type="BioGRID" id="36893">
    <property type="interactions" value="87"/>
</dbReference>
<dbReference type="DIP" id="DIP-1716N"/>
<dbReference type="FunCoup" id="P39944">
    <property type="interactions" value="123"/>
</dbReference>
<dbReference type="IntAct" id="P39944">
    <property type="interactions" value="7"/>
</dbReference>
<dbReference type="MINT" id="P39944"/>
<dbReference type="STRING" id="4932.YER144C"/>
<dbReference type="MEROPS" id="C19.006"/>
<dbReference type="GlyGen" id="P39944">
    <property type="glycosylation" value="4 sites, 1 O-linked glycan (3 sites)"/>
</dbReference>
<dbReference type="iPTMnet" id="P39944"/>
<dbReference type="PaxDb" id="4932-YER144C"/>
<dbReference type="PeptideAtlas" id="P39944"/>
<dbReference type="EnsemblFungi" id="YER144C_mRNA">
    <property type="protein sequence ID" value="YER144C"/>
    <property type="gene ID" value="YER144C"/>
</dbReference>
<dbReference type="GeneID" id="856887"/>
<dbReference type="KEGG" id="sce:YER144C"/>
<dbReference type="AGR" id="SGD:S000000946"/>
<dbReference type="SGD" id="S000000946">
    <property type="gene designation" value="UBP5"/>
</dbReference>
<dbReference type="VEuPathDB" id="FungiDB:YER144C"/>
<dbReference type="eggNOG" id="KOG1868">
    <property type="taxonomic scope" value="Eukaryota"/>
</dbReference>
<dbReference type="GeneTree" id="ENSGT00940000173629"/>
<dbReference type="HOGENOM" id="CLU_005922_1_0_1"/>
<dbReference type="InParanoid" id="P39944"/>
<dbReference type="OMA" id="PFVHTYE"/>
<dbReference type="OrthoDB" id="292964at2759"/>
<dbReference type="BioCyc" id="YEAST:G3O-30305-MONOMER"/>
<dbReference type="BioGRID-ORCS" id="856887">
    <property type="hits" value="5 hits in 10 CRISPR screens"/>
</dbReference>
<dbReference type="PRO" id="PR:P39944"/>
<dbReference type="Proteomes" id="UP000002311">
    <property type="component" value="Chromosome V"/>
</dbReference>
<dbReference type="RNAct" id="P39944">
    <property type="molecule type" value="protein"/>
</dbReference>
<dbReference type="GO" id="GO:0005935">
    <property type="term" value="C:cellular bud neck"/>
    <property type="evidence" value="ECO:0000314"/>
    <property type="project" value="SGD"/>
</dbReference>
<dbReference type="GO" id="GO:0000131">
    <property type="term" value="C:incipient cellular bud site"/>
    <property type="evidence" value="ECO:0000314"/>
    <property type="project" value="SGD"/>
</dbReference>
<dbReference type="GO" id="GO:0004843">
    <property type="term" value="F:cysteine-type deubiquitinase activity"/>
    <property type="evidence" value="ECO:0000304"/>
    <property type="project" value="SGD"/>
</dbReference>
<dbReference type="GO" id="GO:0016579">
    <property type="term" value="P:protein deubiquitination"/>
    <property type="evidence" value="ECO:0000304"/>
    <property type="project" value="SGD"/>
</dbReference>
<dbReference type="GO" id="GO:0006508">
    <property type="term" value="P:proteolysis"/>
    <property type="evidence" value="ECO:0007669"/>
    <property type="project" value="UniProtKB-KW"/>
</dbReference>
<dbReference type="CDD" id="cd02674">
    <property type="entry name" value="Peptidase_C19R"/>
    <property type="match status" value="1"/>
</dbReference>
<dbReference type="FunFam" id="3.90.70.10:FF:000115">
    <property type="entry name" value="DOA4p Ubiquitin hydrolase"/>
    <property type="match status" value="1"/>
</dbReference>
<dbReference type="Gene3D" id="3.90.70.10">
    <property type="entry name" value="Cysteine proteinases"/>
    <property type="match status" value="1"/>
</dbReference>
<dbReference type="Gene3D" id="3.40.250.10">
    <property type="entry name" value="Rhodanese-like domain"/>
    <property type="match status" value="1"/>
</dbReference>
<dbReference type="InterPro" id="IPR038765">
    <property type="entry name" value="Papain-like_cys_pep_sf"/>
</dbReference>
<dbReference type="InterPro" id="IPR001394">
    <property type="entry name" value="Peptidase_C19_UCH"/>
</dbReference>
<dbReference type="InterPro" id="IPR001763">
    <property type="entry name" value="Rhodanese-like_dom"/>
</dbReference>
<dbReference type="InterPro" id="IPR036873">
    <property type="entry name" value="Rhodanese-like_dom_sf"/>
</dbReference>
<dbReference type="InterPro" id="IPR050185">
    <property type="entry name" value="Ub_carboxyl-term_hydrolase"/>
</dbReference>
<dbReference type="InterPro" id="IPR018200">
    <property type="entry name" value="USP_CS"/>
</dbReference>
<dbReference type="InterPro" id="IPR028889">
    <property type="entry name" value="USP_dom"/>
</dbReference>
<dbReference type="PANTHER" id="PTHR21646">
    <property type="entry name" value="UBIQUITIN CARBOXYL-TERMINAL HYDROLASE"/>
    <property type="match status" value="1"/>
</dbReference>
<dbReference type="PANTHER" id="PTHR21646:SF95">
    <property type="entry name" value="UBIQUITIN CARBOXYL-TERMINAL HYDROLASE 4-RELATED"/>
    <property type="match status" value="1"/>
</dbReference>
<dbReference type="Pfam" id="PF00581">
    <property type="entry name" value="Rhodanese"/>
    <property type="match status" value="1"/>
</dbReference>
<dbReference type="Pfam" id="PF00443">
    <property type="entry name" value="UCH"/>
    <property type="match status" value="1"/>
</dbReference>
<dbReference type="SMART" id="SM00450">
    <property type="entry name" value="RHOD"/>
    <property type="match status" value="1"/>
</dbReference>
<dbReference type="SUPFAM" id="SSF54001">
    <property type="entry name" value="Cysteine proteinases"/>
    <property type="match status" value="1"/>
</dbReference>
<dbReference type="SUPFAM" id="SSF52821">
    <property type="entry name" value="Rhodanese/Cell cycle control phosphatase"/>
    <property type="match status" value="1"/>
</dbReference>
<dbReference type="PROSITE" id="PS50206">
    <property type="entry name" value="RHODANESE_3"/>
    <property type="match status" value="1"/>
</dbReference>
<dbReference type="PROSITE" id="PS00972">
    <property type="entry name" value="USP_1"/>
    <property type="match status" value="1"/>
</dbReference>
<dbReference type="PROSITE" id="PS00973">
    <property type="entry name" value="USP_2"/>
    <property type="match status" value="1"/>
</dbReference>
<dbReference type="PROSITE" id="PS50235">
    <property type="entry name" value="USP_3"/>
    <property type="match status" value="1"/>
</dbReference>
<feature type="chain" id="PRO_0000080590" description="Ubiquitin carboxyl-terminal hydrolase 5">
    <location>
        <begin position="1"/>
        <end position="805"/>
    </location>
</feature>
<feature type="domain" description="Rhodanese" evidence="1">
    <location>
        <begin position="159"/>
        <end position="283"/>
    </location>
</feature>
<feature type="domain" description="USP">
    <location>
        <begin position="446"/>
        <end position="804"/>
    </location>
</feature>
<feature type="region of interest" description="Disordered" evidence="4">
    <location>
        <begin position="359"/>
        <end position="380"/>
    </location>
</feature>
<feature type="active site" description="Nucleophile" evidence="2 3">
    <location>
        <position position="455"/>
    </location>
</feature>
<feature type="active site" description="Proton acceptor" evidence="2 3">
    <location>
        <position position="761"/>
    </location>
</feature>
<sequence length="805" mass="92261">MGSEQALSEVVESAKERFGRLRHLVQKFLDDDDVPQECLPLLQECAEIWSSYVDACQDITMQAPKEDANRLSKGFLRLNETAFLYYMIVYTLLEDTLPRLKEFSSNKDQNVRNLYGERIQLLHNDPNIERIRNVIENYPKFIQLQTIEPGKLSSMLHFHGDALLLIDVRPRSEFVRAHIKCKNIICIDPASFKDSFTDQQIESVSLITSPHSDITFFSNRDKFKFIILYTDTQLHNNFQQRQTRILAKILSQNSVIKPLSGTKILILENGFSNWVKLGGAYQSSVSETAHLTSSSSTPAFGSPQVPTGLFNQKSLSPNKDKSMPMVSMNTQPLLTTVQRPQLPLYYSDLPIIPQPSPNRNSPTVQKFSPHPPTTLSKLNTPSTIQNKANTVERISPDIRAAQAHAYLPPASNVFSPRIPPLPQQNLSSSRQTILNNSQVLDLDLIVGLENIGNCCYMNCILQCLVGTHDLVRMFLDNTYLNFINFDSSRGSKGLLAKNFAILVNNMHRHGAFTPPNVRTIPVQTIQFKKICGHINPMYSDSMQQDCQEFCQFLLDGLHEDLNQNGSKKHLKQLSDEEERMREKMSIRKASALEWERFLLTDFSAIIDLFQGQYASRLQCQVCEHTSTTYQTFSVLSVPVPRVKTCNILDCFREFTKCERLGVDEQWSCPKCLKKQPSTKQLKITRLPKKLIINLKRFDNQMNKNNVFVQYPYSLDLTPYWARDFNHEAIVNEDIPTRGQVPPFRYRLYGVACHSGSLYGGHYTSYVYKGPKKGWYFFDDSLYRPITFSTEFITPSAYVLFYERIF</sequence>